<accession>Q21C03</accession>
<keyword id="KW-0378">Hydrolase</keyword>
<keyword id="KW-0479">Metal-binding</keyword>
<keyword id="KW-0862">Zinc</keyword>
<name>GLO2_RHOPB</name>
<gene>
    <name evidence="1" type="primary">gloB</name>
    <name type="ordered locus">RPC_0508</name>
</gene>
<organism>
    <name type="scientific">Rhodopseudomonas palustris (strain BisB18)</name>
    <dbReference type="NCBI Taxonomy" id="316056"/>
    <lineage>
        <taxon>Bacteria</taxon>
        <taxon>Pseudomonadati</taxon>
        <taxon>Pseudomonadota</taxon>
        <taxon>Alphaproteobacteria</taxon>
        <taxon>Hyphomicrobiales</taxon>
        <taxon>Nitrobacteraceae</taxon>
        <taxon>Rhodopseudomonas</taxon>
    </lineage>
</organism>
<dbReference type="EC" id="3.1.2.6" evidence="1"/>
<dbReference type="EMBL" id="CP000301">
    <property type="protein sequence ID" value="ABD86083.1"/>
    <property type="molecule type" value="Genomic_DNA"/>
</dbReference>
<dbReference type="SMR" id="Q21C03"/>
<dbReference type="STRING" id="316056.RPC_0508"/>
<dbReference type="KEGG" id="rpc:RPC_0508"/>
<dbReference type="eggNOG" id="COG0491">
    <property type="taxonomic scope" value="Bacteria"/>
</dbReference>
<dbReference type="HOGENOM" id="CLU_030571_4_1_5"/>
<dbReference type="OrthoDB" id="9802248at2"/>
<dbReference type="UniPathway" id="UPA00619">
    <property type="reaction ID" value="UER00676"/>
</dbReference>
<dbReference type="GO" id="GO:0004416">
    <property type="term" value="F:hydroxyacylglutathione hydrolase activity"/>
    <property type="evidence" value="ECO:0007669"/>
    <property type="project" value="UniProtKB-UniRule"/>
</dbReference>
<dbReference type="GO" id="GO:0046872">
    <property type="term" value="F:metal ion binding"/>
    <property type="evidence" value="ECO:0007669"/>
    <property type="project" value="UniProtKB-KW"/>
</dbReference>
<dbReference type="GO" id="GO:0019243">
    <property type="term" value="P:methylglyoxal catabolic process to D-lactate via S-lactoyl-glutathione"/>
    <property type="evidence" value="ECO:0007669"/>
    <property type="project" value="InterPro"/>
</dbReference>
<dbReference type="CDD" id="cd07723">
    <property type="entry name" value="hydroxyacylglutathione_hydrolase_MBL-fold"/>
    <property type="match status" value="1"/>
</dbReference>
<dbReference type="Gene3D" id="3.60.15.10">
    <property type="entry name" value="Ribonuclease Z/Hydroxyacylglutathione hydrolase-like"/>
    <property type="match status" value="1"/>
</dbReference>
<dbReference type="HAMAP" id="MF_01374">
    <property type="entry name" value="Glyoxalase_2"/>
    <property type="match status" value="1"/>
</dbReference>
<dbReference type="InterPro" id="IPR035680">
    <property type="entry name" value="Clx_II_MBL"/>
</dbReference>
<dbReference type="InterPro" id="IPR050110">
    <property type="entry name" value="Glyoxalase_II_hydrolase"/>
</dbReference>
<dbReference type="InterPro" id="IPR032282">
    <property type="entry name" value="HAGH_C"/>
</dbReference>
<dbReference type="InterPro" id="IPR017782">
    <property type="entry name" value="Hydroxyacylglutathione_Hdrlase"/>
</dbReference>
<dbReference type="InterPro" id="IPR001279">
    <property type="entry name" value="Metallo-B-lactamas"/>
</dbReference>
<dbReference type="InterPro" id="IPR036866">
    <property type="entry name" value="RibonucZ/Hydroxyglut_hydro"/>
</dbReference>
<dbReference type="NCBIfam" id="TIGR03413">
    <property type="entry name" value="GSH_gloB"/>
    <property type="match status" value="1"/>
</dbReference>
<dbReference type="PANTHER" id="PTHR43705">
    <property type="entry name" value="HYDROXYACYLGLUTATHIONE HYDROLASE"/>
    <property type="match status" value="1"/>
</dbReference>
<dbReference type="PANTHER" id="PTHR43705:SF1">
    <property type="entry name" value="HYDROXYACYLGLUTATHIONE HYDROLASE GLOB"/>
    <property type="match status" value="1"/>
</dbReference>
<dbReference type="Pfam" id="PF16123">
    <property type="entry name" value="HAGH_C"/>
    <property type="match status" value="1"/>
</dbReference>
<dbReference type="Pfam" id="PF00753">
    <property type="entry name" value="Lactamase_B"/>
    <property type="match status" value="1"/>
</dbReference>
<dbReference type="PIRSF" id="PIRSF005457">
    <property type="entry name" value="Glx"/>
    <property type="match status" value="1"/>
</dbReference>
<dbReference type="SMART" id="SM00849">
    <property type="entry name" value="Lactamase_B"/>
    <property type="match status" value="1"/>
</dbReference>
<dbReference type="SUPFAM" id="SSF56281">
    <property type="entry name" value="Metallo-hydrolase/oxidoreductase"/>
    <property type="match status" value="1"/>
</dbReference>
<evidence type="ECO:0000255" key="1">
    <source>
        <dbReference type="HAMAP-Rule" id="MF_01374"/>
    </source>
</evidence>
<reference key="1">
    <citation type="submission" date="2006-03" db="EMBL/GenBank/DDBJ databases">
        <title>Complete sequence of Rhodopseudomonas palustris BisB18.</title>
        <authorList>
            <consortium name="US DOE Joint Genome Institute"/>
            <person name="Copeland A."/>
            <person name="Lucas S."/>
            <person name="Lapidus A."/>
            <person name="Barry K."/>
            <person name="Detter J.C."/>
            <person name="Glavina del Rio T."/>
            <person name="Hammon N."/>
            <person name="Israni S."/>
            <person name="Dalin E."/>
            <person name="Tice H."/>
            <person name="Pitluck S."/>
            <person name="Chain P."/>
            <person name="Malfatti S."/>
            <person name="Shin M."/>
            <person name="Vergez L."/>
            <person name="Schmutz J."/>
            <person name="Larimer F."/>
            <person name="Land M."/>
            <person name="Hauser L."/>
            <person name="Pelletier D.A."/>
            <person name="Kyrpides N."/>
            <person name="Anderson I."/>
            <person name="Oda Y."/>
            <person name="Harwood C.S."/>
            <person name="Richardson P."/>
        </authorList>
    </citation>
    <scope>NUCLEOTIDE SEQUENCE [LARGE SCALE GENOMIC DNA]</scope>
    <source>
        <strain>BisB18</strain>
    </source>
</reference>
<protein>
    <recommendedName>
        <fullName evidence="1">Hydroxyacylglutathione hydrolase</fullName>
        <ecNumber evidence="1">3.1.2.6</ecNumber>
    </recommendedName>
    <alternativeName>
        <fullName evidence="1">Glyoxalase II</fullName>
        <shortName evidence="1">Glx II</shortName>
    </alternativeName>
</protein>
<comment type="function">
    <text evidence="1">Thiolesterase that catalyzes the hydrolysis of S-D-lactoyl-glutathione to form glutathione and D-lactic acid.</text>
</comment>
<comment type="catalytic activity">
    <reaction evidence="1">
        <text>an S-(2-hydroxyacyl)glutathione + H2O = a 2-hydroxy carboxylate + glutathione + H(+)</text>
        <dbReference type="Rhea" id="RHEA:21864"/>
        <dbReference type="ChEBI" id="CHEBI:15377"/>
        <dbReference type="ChEBI" id="CHEBI:15378"/>
        <dbReference type="ChEBI" id="CHEBI:57925"/>
        <dbReference type="ChEBI" id="CHEBI:58896"/>
        <dbReference type="ChEBI" id="CHEBI:71261"/>
        <dbReference type="EC" id="3.1.2.6"/>
    </reaction>
</comment>
<comment type="cofactor">
    <cofactor evidence="1">
        <name>Zn(2+)</name>
        <dbReference type="ChEBI" id="CHEBI:29105"/>
    </cofactor>
    <text evidence="1">Binds 2 Zn(2+) ions per subunit.</text>
</comment>
<comment type="pathway">
    <text evidence="1">Secondary metabolite metabolism; methylglyoxal degradation; (R)-lactate from methylglyoxal: step 2/2.</text>
</comment>
<comment type="subunit">
    <text evidence="1">Monomer.</text>
</comment>
<comment type="similarity">
    <text evidence="1">Belongs to the metallo-beta-lactamase superfamily. Glyoxalase II family.</text>
</comment>
<proteinExistence type="inferred from homology"/>
<feature type="chain" id="PRO_0000309695" description="Hydroxyacylglutathione hydrolase">
    <location>
        <begin position="1"/>
        <end position="255"/>
    </location>
</feature>
<feature type="binding site" evidence="1">
    <location>
        <position position="56"/>
    </location>
    <ligand>
        <name>Zn(2+)</name>
        <dbReference type="ChEBI" id="CHEBI:29105"/>
        <label>1</label>
    </ligand>
</feature>
<feature type="binding site" evidence="1">
    <location>
        <position position="58"/>
    </location>
    <ligand>
        <name>Zn(2+)</name>
        <dbReference type="ChEBI" id="CHEBI:29105"/>
        <label>1</label>
    </ligand>
</feature>
<feature type="binding site" evidence="1">
    <location>
        <position position="60"/>
    </location>
    <ligand>
        <name>Zn(2+)</name>
        <dbReference type="ChEBI" id="CHEBI:29105"/>
        <label>2</label>
    </ligand>
</feature>
<feature type="binding site" evidence="1">
    <location>
        <position position="61"/>
    </location>
    <ligand>
        <name>Zn(2+)</name>
        <dbReference type="ChEBI" id="CHEBI:29105"/>
        <label>2</label>
    </ligand>
</feature>
<feature type="binding site" evidence="1">
    <location>
        <position position="114"/>
    </location>
    <ligand>
        <name>Zn(2+)</name>
        <dbReference type="ChEBI" id="CHEBI:29105"/>
        <label>1</label>
    </ligand>
</feature>
<feature type="binding site" evidence="1">
    <location>
        <position position="133"/>
    </location>
    <ligand>
        <name>Zn(2+)</name>
        <dbReference type="ChEBI" id="CHEBI:29105"/>
        <label>1</label>
    </ligand>
</feature>
<feature type="binding site" evidence="1">
    <location>
        <position position="133"/>
    </location>
    <ligand>
        <name>Zn(2+)</name>
        <dbReference type="ChEBI" id="CHEBI:29105"/>
        <label>2</label>
    </ligand>
</feature>
<feature type="binding site" evidence="1">
    <location>
        <position position="171"/>
    </location>
    <ligand>
        <name>Zn(2+)</name>
        <dbReference type="ChEBI" id="CHEBI:29105"/>
        <label>2</label>
    </ligand>
</feature>
<sequence length="255" mass="27570">MAAEIRVFTCLKDNFGYLVHDSDSGATASIDAPEAAPILAALAREGWTLTDILVTHHHADHIGGIAELKQATNCRVVAPHDNGAAIPLVDLRVRQGDVVKIGGLLARVLETPGHTLDHVAYVFDDDKALFAADTLFSIGCGRVFEGTYPMMWESLLKLRVLPDDMRLYCGHEYTAANVKFALTVEPNNPALQARAAEVAHLRTAGLPTIPTLLGDEKRANVFLRADEPTVAAGVRLKGAGAVEVFTELRERKNKS</sequence>